<accession>Q4WPN0</accession>
<gene>
    <name type="primary">bna5-2</name>
    <name type="ORF">AFUA_4G09840</name>
</gene>
<proteinExistence type="inferred from homology"/>
<comment type="function">
    <text evidence="1">Catalyzes the cleavage of L-kynurenine (L-Kyn) and L-3-hydroxykynurenine (L-3OHKyn) into anthranilic acid (AA) and 3-hydroxyanthranilic acid (3-OHAA), respectively.</text>
</comment>
<comment type="catalytic activity">
    <reaction evidence="1">
        <text>L-kynurenine + H2O = anthranilate + L-alanine + H(+)</text>
        <dbReference type="Rhea" id="RHEA:16813"/>
        <dbReference type="ChEBI" id="CHEBI:15377"/>
        <dbReference type="ChEBI" id="CHEBI:15378"/>
        <dbReference type="ChEBI" id="CHEBI:16567"/>
        <dbReference type="ChEBI" id="CHEBI:57959"/>
        <dbReference type="ChEBI" id="CHEBI:57972"/>
        <dbReference type="EC" id="3.7.1.3"/>
    </reaction>
</comment>
<comment type="catalytic activity">
    <reaction evidence="1">
        <text>3-hydroxy-L-kynurenine + H2O = 3-hydroxyanthranilate + L-alanine + H(+)</text>
        <dbReference type="Rhea" id="RHEA:25143"/>
        <dbReference type="ChEBI" id="CHEBI:15377"/>
        <dbReference type="ChEBI" id="CHEBI:15378"/>
        <dbReference type="ChEBI" id="CHEBI:36559"/>
        <dbReference type="ChEBI" id="CHEBI:57972"/>
        <dbReference type="ChEBI" id="CHEBI:58125"/>
        <dbReference type="EC" id="3.7.1.3"/>
    </reaction>
</comment>
<comment type="cofactor">
    <cofactor evidence="1">
        <name>pyridoxal 5'-phosphate</name>
        <dbReference type="ChEBI" id="CHEBI:597326"/>
    </cofactor>
</comment>
<comment type="pathway">
    <text evidence="1">Amino-acid degradation; L-kynurenine degradation; L-alanine and anthranilate from L-kynurenine: step 1/1.</text>
</comment>
<comment type="pathway">
    <text evidence="1">Cofactor biosynthesis; NAD(+) biosynthesis; quinolinate from L-kynurenine: step 2/3.</text>
</comment>
<comment type="subunit">
    <text evidence="1">Homodimer.</text>
</comment>
<comment type="subcellular location">
    <subcellularLocation>
        <location evidence="1">Cytoplasm</location>
    </subcellularLocation>
</comment>
<comment type="similarity">
    <text evidence="1">Belongs to the kynureninase family.</text>
</comment>
<keyword id="KW-0963">Cytoplasm</keyword>
<keyword id="KW-0378">Hydrolase</keyword>
<keyword id="KW-0662">Pyridine nucleotide biosynthesis</keyword>
<keyword id="KW-0663">Pyridoxal phosphate</keyword>
<keyword id="KW-1185">Reference proteome</keyword>
<dbReference type="EC" id="3.7.1.3" evidence="1"/>
<dbReference type="EMBL" id="AAHF01000005">
    <property type="protein sequence ID" value="EAL89804.1"/>
    <property type="molecule type" value="Genomic_DNA"/>
</dbReference>
<dbReference type="RefSeq" id="XP_751842.1">
    <property type="nucleotide sequence ID" value="XM_746749.1"/>
</dbReference>
<dbReference type="SMR" id="Q4WPN0"/>
<dbReference type="FunCoup" id="Q4WPN0">
    <property type="interactions" value="206"/>
</dbReference>
<dbReference type="STRING" id="330879.Q4WPN0"/>
<dbReference type="EnsemblFungi" id="EAL89804">
    <property type="protein sequence ID" value="EAL89804"/>
    <property type="gene ID" value="AFUA_4G09840"/>
</dbReference>
<dbReference type="GeneID" id="3509348"/>
<dbReference type="KEGG" id="afm:AFUA_4G09840"/>
<dbReference type="VEuPathDB" id="FungiDB:Afu4g09840"/>
<dbReference type="eggNOG" id="KOG3846">
    <property type="taxonomic scope" value="Eukaryota"/>
</dbReference>
<dbReference type="HOGENOM" id="CLU_003433_4_0_1"/>
<dbReference type="InParanoid" id="Q4WPN0"/>
<dbReference type="OMA" id="SHVAYRS"/>
<dbReference type="OrthoDB" id="5978656at2759"/>
<dbReference type="UniPathway" id="UPA00253">
    <property type="reaction ID" value="UER00329"/>
</dbReference>
<dbReference type="UniPathway" id="UPA00334">
    <property type="reaction ID" value="UER00455"/>
</dbReference>
<dbReference type="Proteomes" id="UP000002530">
    <property type="component" value="Chromosome 4"/>
</dbReference>
<dbReference type="GO" id="GO:0005737">
    <property type="term" value="C:cytoplasm"/>
    <property type="evidence" value="ECO:0000318"/>
    <property type="project" value="GO_Central"/>
</dbReference>
<dbReference type="GO" id="GO:0030429">
    <property type="term" value="F:kynureninase activity"/>
    <property type="evidence" value="ECO:0000318"/>
    <property type="project" value="GO_Central"/>
</dbReference>
<dbReference type="GO" id="GO:0030170">
    <property type="term" value="F:pyridoxal phosphate binding"/>
    <property type="evidence" value="ECO:0007669"/>
    <property type="project" value="UniProtKB-UniRule"/>
</dbReference>
<dbReference type="GO" id="GO:0034354">
    <property type="term" value="P:'de novo' NAD biosynthetic process from L-tryptophan"/>
    <property type="evidence" value="ECO:0007669"/>
    <property type="project" value="UniProtKB-UniRule"/>
</dbReference>
<dbReference type="GO" id="GO:0043420">
    <property type="term" value="P:anthranilate metabolic process"/>
    <property type="evidence" value="ECO:0000318"/>
    <property type="project" value="GO_Central"/>
</dbReference>
<dbReference type="GO" id="GO:0097053">
    <property type="term" value="P:L-kynurenine catabolic process"/>
    <property type="evidence" value="ECO:0007669"/>
    <property type="project" value="UniProtKB-UniRule"/>
</dbReference>
<dbReference type="GO" id="GO:0019441">
    <property type="term" value="P:L-tryptophan catabolic process to kynurenine"/>
    <property type="evidence" value="ECO:0000318"/>
    <property type="project" value="GO_Central"/>
</dbReference>
<dbReference type="GO" id="GO:0019805">
    <property type="term" value="P:quinolinate biosynthetic process"/>
    <property type="evidence" value="ECO:0007669"/>
    <property type="project" value="UniProtKB-UniRule"/>
</dbReference>
<dbReference type="FunFam" id="3.40.640.10:FF:000031">
    <property type="entry name" value="Kynureninase"/>
    <property type="match status" value="1"/>
</dbReference>
<dbReference type="Gene3D" id="3.90.1150.10">
    <property type="entry name" value="Aspartate Aminotransferase, domain 1"/>
    <property type="match status" value="1"/>
</dbReference>
<dbReference type="Gene3D" id="3.40.640.10">
    <property type="entry name" value="Type I PLP-dependent aspartate aminotransferase-like (Major domain)"/>
    <property type="match status" value="1"/>
</dbReference>
<dbReference type="HAMAP" id="MF_01970">
    <property type="entry name" value="Kynureninase"/>
    <property type="match status" value="1"/>
</dbReference>
<dbReference type="InterPro" id="IPR000192">
    <property type="entry name" value="Aminotrans_V_dom"/>
</dbReference>
<dbReference type="InterPro" id="IPR010111">
    <property type="entry name" value="Kynureninase"/>
</dbReference>
<dbReference type="InterPro" id="IPR015424">
    <property type="entry name" value="PyrdxlP-dep_Trfase"/>
</dbReference>
<dbReference type="InterPro" id="IPR015421">
    <property type="entry name" value="PyrdxlP-dep_Trfase_major"/>
</dbReference>
<dbReference type="InterPro" id="IPR015422">
    <property type="entry name" value="PyrdxlP-dep_Trfase_small"/>
</dbReference>
<dbReference type="NCBIfam" id="TIGR01814">
    <property type="entry name" value="kynureninase"/>
    <property type="match status" value="1"/>
</dbReference>
<dbReference type="PANTHER" id="PTHR14084">
    <property type="entry name" value="KYNURENINASE"/>
    <property type="match status" value="1"/>
</dbReference>
<dbReference type="PANTHER" id="PTHR14084:SF2">
    <property type="entry name" value="KYNURENINASE 2"/>
    <property type="match status" value="1"/>
</dbReference>
<dbReference type="Pfam" id="PF00266">
    <property type="entry name" value="Aminotran_5"/>
    <property type="match status" value="1"/>
</dbReference>
<dbReference type="Pfam" id="PF22580">
    <property type="entry name" value="KYNU_C"/>
    <property type="match status" value="1"/>
</dbReference>
<dbReference type="PIRSF" id="PIRSF038800">
    <property type="entry name" value="KYNU"/>
    <property type="match status" value="1"/>
</dbReference>
<dbReference type="SUPFAM" id="SSF53383">
    <property type="entry name" value="PLP-dependent transferases"/>
    <property type="match status" value="1"/>
</dbReference>
<organism>
    <name type="scientific">Aspergillus fumigatus (strain ATCC MYA-4609 / CBS 101355 / FGSC A1100 / Af293)</name>
    <name type="common">Neosartorya fumigata</name>
    <dbReference type="NCBI Taxonomy" id="330879"/>
    <lineage>
        <taxon>Eukaryota</taxon>
        <taxon>Fungi</taxon>
        <taxon>Dikarya</taxon>
        <taxon>Ascomycota</taxon>
        <taxon>Pezizomycotina</taxon>
        <taxon>Eurotiomycetes</taxon>
        <taxon>Eurotiomycetidae</taxon>
        <taxon>Eurotiales</taxon>
        <taxon>Aspergillaceae</taxon>
        <taxon>Aspergillus</taxon>
        <taxon>Aspergillus subgen. Fumigati</taxon>
    </lineage>
</organism>
<protein>
    <recommendedName>
        <fullName evidence="1">Kynureninase 2</fullName>
        <ecNumber evidence="1">3.7.1.3</ecNumber>
    </recommendedName>
    <alternativeName>
        <fullName evidence="1">Biosynthesis of nicotinic acid protein 5-2</fullName>
    </alternativeName>
    <alternativeName>
        <fullName evidence="1">L-kynurenine hydrolase 2</fullName>
    </alternativeName>
</protein>
<feature type="chain" id="PRO_0000356966" description="Kynureninase 2">
    <location>
        <begin position="1"/>
        <end position="464"/>
    </location>
</feature>
<feature type="binding site" evidence="1">
    <location>
        <position position="135"/>
    </location>
    <ligand>
        <name>pyridoxal 5'-phosphate</name>
        <dbReference type="ChEBI" id="CHEBI:597326"/>
    </ligand>
</feature>
<feature type="binding site" evidence="1">
    <location>
        <position position="136"/>
    </location>
    <ligand>
        <name>pyridoxal 5'-phosphate</name>
        <dbReference type="ChEBI" id="CHEBI:597326"/>
    </ligand>
</feature>
<feature type="binding site" evidence="1">
    <location>
        <begin position="163"/>
        <end position="166"/>
    </location>
    <ligand>
        <name>pyridoxal 5'-phosphate</name>
        <dbReference type="ChEBI" id="CHEBI:597326"/>
    </ligand>
</feature>
<feature type="binding site" evidence="1">
    <location>
        <position position="248"/>
    </location>
    <ligand>
        <name>pyridoxal 5'-phosphate</name>
        <dbReference type="ChEBI" id="CHEBI:597326"/>
    </ligand>
</feature>
<feature type="binding site" evidence="1">
    <location>
        <position position="251"/>
    </location>
    <ligand>
        <name>pyridoxal 5'-phosphate</name>
        <dbReference type="ChEBI" id="CHEBI:597326"/>
    </ligand>
</feature>
<feature type="binding site" evidence="1">
    <location>
        <position position="273"/>
    </location>
    <ligand>
        <name>pyridoxal 5'-phosphate</name>
        <dbReference type="ChEBI" id="CHEBI:597326"/>
    </ligand>
</feature>
<feature type="binding site" evidence="1">
    <location>
        <position position="313"/>
    </location>
    <ligand>
        <name>pyridoxal 5'-phosphate</name>
        <dbReference type="ChEBI" id="CHEBI:597326"/>
    </ligand>
</feature>
<feature type="binding site" evidence="1">
    <location>
        <position position="341"/>
    </location>
    <ligand>
        <name>pyridoxal 5'-phosphate</name>
        <dbReference type="ChEBI" id="CHEBI:597326"/>
    </ligand>
</feature>
<feature type="modified residue" description="N6-(pyridoxal phosphate)lysine" evidence="1">
    <location>
        <position position="274"/>
    </location>
</feature>
<reference key="1">
    <citation type="journal article" date="2005" name="Nature">
        <title>Genomic sequence of the pathogenic and allergenic filamentous fungus Aspergillus fumigatus.</title>
        <authorList>
            <person name="Nierman W.C."/>
            <person name="Pain A."/>
            <person name="Anderson M.J."/>
            <person name="Wortman J.R."/>
            <person name="Kim H.S."/>
            <person name="Arroyo J."/>
            <person name="Berriman M."/>
            <person name="Abe K."/>
            <person name="Archer D.B."/>
            <person name="Bermejo C."/>
            <person name="Bennett J.W."/>
            <person name="Bowyer P."/>
            <person name="Chen D."/>
            <person name="Collins M."/>
            <person name="Coulsen R."/>
            <person name="Davies R."/>
            <person name="Dyer P.S."/>
            <person name="Farman M.L."/>
            <person name="Fedorova N."/>
            <person name="Fedorova N.D."/>
            <person name="Feldblyum T.V."/>
            <person name="Fischer R."/>
            <person name="Fosker N."/>
            <person name="Fraser A."/>
            <person name="Garcia J.L."/>
            <person name="Garcia M.J."/>
            <person name="Goble A."/>
            <person name="Goldman G.H."/>
            <person name="Gomi K."/>
            <person name="Griffith-Jones S."/>
            <person name="Gwilliam R."/>
            <person name="Haas B.J."/>
            <person name="Haas H."/>
            <person name="Harris D.E."/>
            <person name="Horiuchi H."/>
            <person name="Huang J."/>
            <person name="Humphray S."/>
            <person name="Jimenez J."/>
            <person name="Keller N."/>
            <person name="Khouri H."/>
            <person name="Kitamoto K."/>
            <person name="Kobayashi T."/>
            <person name="Konzack S."/>
            <person name="Kulkarni R."/>
            <person name="Kumagai T."/>
            <person name="Lafton A."/>
            <person name="Latge J.-P."/>
            <person name="Li W."/>
            <person name="Lord A."/>
            <person name="Lu C."/>
            <person name="Majoros W.H."/>
            <person name="May G.S."/>
            <person name="Miller B.L."/>
            <person name="Mohamoud Y."/>
            <person name="Molina M."/>
            <person name="Monod M."/>
            <person name="Mouyna I."/>
            <person name="Mulligan S."/>
            <person name="Murphy L.D."/>
            <person name="O'Neil S."/>
            <person name="Paulsen I."/>
            <person name="Penalva M.A."/>
            <person name="Pertea M."/>
            <person name="Price C."/>
            <person name="Pritchard B.L."/>
            <person name="Quail M.A."/>
            <person name="Rabbinowitsch E."/>
            <person name="Rawlins N."/>
            <person name="Rajandream M.A."/>
            <person name="Reichard U."/>
            <person name="Renauld H."/>
            <person name="Robson G.D."/>
            <person name="Rodriguez de Cordoba S."/>
            <person name="Rodriguez-Pena J.M."/>
            <person name="Ronning C.M."/>
            <person name="Rutter S."/>
            <person name="Salzberg S.L."/>
            <person name="Sanchez M."/>
            <person name="Sanchez-Ferrero J.C."/>
            <person name="Saunders D."/>
            <person name="Seeger K."/>
            <person name="Squares R."/>
            <person name="Squares S."/>
            <person name="Takeuchi M."/>
            <person name="Tekaia F."/>
            <person name="Turner G."/>
            <person name="Vazquez de Aldana C.R."/>
            <person name="Weidman J."/>
            <person name="White O."/>
            <person name="Woodward J.R."/>
            <person name="Yu J.-H."/>
            <person name="Fraser C.M."/>
            <person name="Galagan J.E."/>
            <person name="Asai K."/>
            <person name="Machida M."/>
            <person name="Hall N."/>
            <person name="Barrell B.G."/>
            <person name="Denning D.W."/>
        </authorList>
    </citation>
    <scope>NUCLEOTIDE SEQUENCE [LARGE SCALE GENOMIC DNA]</scope>
    <source>
        <strain>ATCC MYA-4609 / CBS 101355 / FGSC A1100 / Af293</strain>
    </source>
</reference>
<sequence>MSTNGTLSKPEFPANAASKEYAASLDAADPFAGFREKFIIPSKANIASTKLAKPGLSSEPCIYFCGNSLGIQPKATQKYLEAQLDTWSSIGVCGHFTKIEDSPLKEWQNLAEQAAESMSKIVGAAPEEVAAMGTLTMNLHLLLASFFKPTATKRKILMDWKAFPSDHYAIESHLAWHHLDPKETMVLIGPDEGTYEIPTEKILSYIDQHADEAALILLPGIQYYTGQLFDIPKITEYAHSRGLIVGWDLAHAYANVPLKLHDWDVDFAAWCTYKYGNAGPGAMAGLFVHEKHGQVDYSEGEDAPKFRHRLTGWYGGDKSVRFKMDNKFKPIPGAGGYQISNPSAIDLACLCAALSVFDETSIAELRKKSVLMTAYLEYLLLKDTTDESRQFQIITPSDPAARGAQLSLLLKPGLLHKVAHRLQEAGIICDKREPGVVRVAPVPLYNTFTEIWMFVQQLKAALEG</sequence>
<name>KYNU2_ASPFU</name>
<evidence type="ECO:0000255" key="1">
    <source>
        <dbReference type="HAMAP-Rule" id="MF_03017"/>
    </source>
</evidence>